<keyword id="KW-0169">Cobalamin biosynthesis</keyword>
<keyword id="KW-0413">Isomerase</keyword>
<keyword id="KW-1185">Reference proteome</keyword>
<dbReference type="EC" id="5.4.99.60"/>
<dbReference type="EMBL" id="L77117">
    <property type="protein sequence ID" value="AAB98932.1"/>
    <property type="molecule type" value="Genomic_DNA"/>
</dbReference>
<dbReference type="PIR" id="B64416">
    <property type="entry name" value="B64416"/>
</dbReference>
<dbReference type="RefSeq" id="WP_010870444.1">
    <property type="nucleotide sequence ID" value="NC_000909.1"/>
</dbReference>
<dbReference type="SMR" id="Q58340"/>
<dbReference type="FunCoup" id="Q58340">
    <property type="interactions" value="110"/>
</dbReference>
<dbReference type="STRING" id="243232.MJ_0930"/>
<dbReference type="PaxDb" id="243232-MJ_0930"/>
<dbReference type="EnsemblBacteria" id="AAB98932">
    <property type="protein sequence ID" value="AAB98932"/>
    <property type="gene ID" value="MJ_0930"/>
</dbReference>
<dbReference type="GeneID" id="1451819"/>
<dbReference type="KEGG" id="mja:MJ_0930"/>
<dbReference type="eggNOG" id="arCOG02247">
    <property type="taxonomic scope" value="Archaea"/>
</dbReference>
<dbReference type="HOGENOM" id="CLU_084703_1_1_2"/>
<dbReference type="InParanoid" id="Q58340"/>
<dbReference type="OrthoDB" id="24491at2157"/>
<dbReference type="PhylomeDB" id="Q58340"/>
<dbReference type="UniPathway" id="UPA00148">
    <property type="reaction ID" value="UER00230"/>
</dbReference>
<dbReference type="Proteomes" id="UP000000805">
    <property type="component" value="Chromosome"/>
</dbReference>
<dbReference type="GO" id="GO:0043778">
    <property type="term" value="F:cobalt-precorrin-8 methylmutase activity"/>
    <property type="evidence" value="ECO:0007669"/>
    <property type="project" value="UniProtKB-EC"/>
</dbReference>
<dbReference type="GO" id="GO:0016993">
    <property type="term" value="F:precorrin-8X methylmutase activity"/>
    <property type="evidence" value="ECO:0007669"/>
    <property type="project" value="InterPro"/>
</dbReference>
<dbReference type="GO" id="GO:0009236">
    <property type="term" value="P:cobalamin biosynthetic process"/>
    <property type="evidence" value="ECO:0007669"/>
    <property type="project" value="UniProtKB-UniPathway"/>
</dbReference>
<dbReference type="Gene3D" id="3.40.50.10230">
    <property type="entry name" value="Cobalamin biosynthesis CobH/CbiC, precorrin-8X methylmutase"/>
    <property type="match status" value="1"/>
</dbReference>
<dbReference type="InterPro" id="IPR003722">
    <property type="entry name" value="Cbl_synth_CobH/CbiC"/>
</dbReference>
<dbReference type="InterPro" id="IPR036588">
    <property type="entry name" value="CobH/CbiC_sf"/>
</dbReference>
<dbReference type="NCBIfam" id="NF004901">
    <property type="entry name" value="PRK06264.1"/>
    <property type="match status" value="1"/>
</dbReference>
<dbReference type="PANTHER" id="PTHR43588">
    <property type="entry name" value="COBALT-PRECORRIN-8 METHYLMUTASE"/>
    <property type="match status" value="1"/>
</dbReference>
<dbReference type="PANTHER" id="PTHR43588:SF1">
    <property type="entry name" value="COBALT-PRECORRIN-8 METHYLMUTASE"/>
    <property type="match status" value="1"/>
</dbReference>
<dbReference type="Pfam" id="PF02570">
    <property type="entry name" value="CbiC"/>
    <property type="match status" value="1"/>
</dbReference>
<dbReference type="SUPFAM" id="SSF63965">
    <property type="entry name" value="Precorrin-8X methylmutase CbiC/CobH"/>
    <property type="match status" value="1"/>
</dbReference>
<sequence length="210" mass="22974">MGAISKDGLNIANKSREIVRNKIKEVLGDRINEFNEKEMGIIERVVHATADPEYAKLLVFKNNPIEEGIKAIKEEKPIIVDVNMIKAGIRYNKVHCFINHPDVYEVAKKEGITRAVASMRLAKDLIDDGIVVIGNSPTALFEVIRLVKEENIKPKLIVGVPVGFVQASESKEALREVNVPSISTIGPKGGTPVAVAIINGIIAYAKNEKA</sequence>
<organism>
    <name type="scientific">Methanocaldococcus jannaschii (strain ATCC 43067 / DSM 2661 / JAL-1 / JCM 10045 / NBRC 100440)</name>
    <name type="common">Methanococcus jannaschii</name>
    <dbReference type="NCBI Taxonomy" id="243232"/>
    <lineage>
        <taxon>Archaea</taxon>
        <taxon>Methanobacteriati</taxon>
        <taxon>Methanobacteriota</taxon>
        <taxon>Methanomada group</taxon>
        <taxon>Methanococci</taxon>
        <taxon>Methanococcales</taxon>
        <taxon>Methanocaldococcaceae</taxon>
        <taxon>Methanocaldococcus</taxon>
    </lineage>
</organism>
<reference key="1">
    <citation type="journal article" date="1996" name="Science">
        <title>Complete genome sequence of the methanogenic archaeon, Methanococcus jannaschii.</title>
        <authorList>
            <person name="Bult C.J."/>
            <person name="White O."/>
            <person name="Olsen G.J."/>
            <person name="Zhou L."/>
            <person name="Fleischmann R.D."/>
            <person name="Sutton G.G."/>
            <person name="Blake J.A."/>
            <person name="FitzGerald L.M."/>
            <person name="Clayton R.A."/>
            <person name="Gocayne J.D."/>
            <person name="Kerlavage A.R."/>
            <person name="Dougherty B.A."/>
            <person name="Tomb J.-F."/>
            <person name="Adams M.D."/>
            <person name="Reich C.I."/>
            <person name="Overbeek R."/>
            <person name="Kirkness E.F."/>
            <person name="Weinstock K.G."/>
            <person name="Merrick J.M."/>
            <person name="Glodek A."/>
            <person name="Scott J.L."/>
            <person name="Geoghagen N.S.M."/>
            <person name="Weidman J.F."/>
            <person name="Fuhrmann J.L."/>
            <person name="Nguyen D."/>
            <person name="Utterback T.R."/>
            <person name="Kelley J.M."/>
            <person name="Peterson J.D."/>
            <person name="Sadow P.W."/>
            <person name="Hanna M.C."/>
            <person name="Cotton M.D."/>
            <person name="Roberts K.M."/>
            <person name="Hurst M.A."/>
            <person name="Kaine B.P."/>
            <person name="Borodovsky M."/>
            <person name="Klenk H.-P."/>
            <person name="Fraser C.M."/>
            <person name="Smith H.O."/>
            <person name="Woese C.R."/>
            <person name="Venter J.C."/>
        </authorList>
    </citation>
    <scope>NUCLEOTIDE SEQUENCE [LARGE SCALE GENOMIC DNA]</scope>
    <source>
        <strain>ATCC 43067 / DSM 2661 / JAL-1 / JCM 10045 / NBRC 100440</strain>
    </source>
</reference>
<feature type="chain" id="PRO_0000135928" description="Cobalt-precorrin-8 methylmutase">
    <location>
        <begin position="1"/>
        <end position="210"/>
    </location>
</feature>
<feature type="active site" description="Proton donor/acceptor" evidence="1">
    <location>
        <position position="47"/>
    </location>
</feature>
<feature type="binding site" evidence="1">
    <location>
        <position position="15"/>
    </location>
    <ligand>
        <name>substrate</name>
    </ligand>
</feature>
<feature type="binding site" evidence="1">
    <location>
        <position position="44"/>
    </location>
    <ligand>
        <name>substrate</name>
    </ligand>
</feature>
<name>CBIC_METJA</name>
<accession>Q58340</accession>
<gene>
    <name type="primary">cbiC</name>
    <name type="synonym">cobH</name>
    <name type="ordered locus">MJ0930</name>
</gene>
<evidence type="ECO:0000250" key="1"/>
<evidence type="ECO:0000305" key="2"/>
<comment type="function">
    <text evidence="1">Catalyzes the conversion of cobalt-precorrin-8 to cobyrinate.</text>
</comment>
<comment type="catalytic activity">
    <reaction>
        <text>Co-precorrin-8X = cob(II)yrinate</text>
        <dbReference type="Rhea" id="RHEA:16209"/>
        <dbReference type="ChEBI" id="CHEBI:58894"/>
        <dbReference type="ChEBI" id="CHEBI:70792"/>
        <dbReference type="EC" id="5.4.99.60"/>
    </reaction>
</comment>
<comment type="pathway">
    <text>Cofactor biosynthesis; adenosylcobalamin biosynthesis; cob(II)yrinate a,c-diamide from sirohydrochlorin (anaerobic route): step 9/10.</text>
</comment>
<comment type="subunit">
    <text evidence="1">Homodimer.</text>
</comment>
<comment type="similarity">
    <text evidence="2">Belongs to the CobH/CbiC family.</text>
</comment>
<protein>
    <recommendedName>
        <fullName>Cobalt-precorrin-8 methylmutase</fullName>
        <ecNumber>5.4.99.60</ecNumber>
    </recommendedName>
    <alternativeName>
        <fullName>Cobalt-precorrin isomerase</fullName>
    </alternativeName>
</protein>
<proteinExistence type="inferred from homology"/>